<name>SYI_NAUPA</name>
<organism>
    <name type="scientific">Nautilia profundicola (strain ATCC BAA-1463 / DSM 18972 / AmH)</name>
    <dbReference type="NCBI Taxonomy" id="598659"/>
    <lineage>
        <taxon>Bacteria</taxon>
        <taxon>Pseudomonadati</taxon>
        <taxon>Campylobacterota</taxon>
        <taxon>Epsilonproteobacteria</taxon>
        <taxon>Nautiliales</taxon>
        <taxon>Nautiliaceae</taxon>
        <taxon>Nautilia</taxon>
    </lineage>
</organism>
<evidence type="ECO:0000255" key="1">
    <source>
        <dbReference type="HAMAP-Rule" id="MF_02002"/>
    </source>
</evidence>
<dbReference type="EC" id="6.1.1.5" evidence="1"/>
<dbReference type="EMBL" id="CP001279">
    <property type="protein sequence ID" value="ACM92881.1"/>
    <property type="molecule type" value="Genomic_DNA"/>
</dbReference>
<dbReference type="RefSeq" id="WP_015901933.1">
    <property type="nucleotide sequence ID" value="NC_012115.1"/>
</dbReference>
<dbReference type="SMR" id="B9L8Z9"/>
<dbReference type="STRING" id="598659.NAMH_0696"/>
<dbReference type="KEGG" id="nam:NAMH_0696"/>
<dbReference type="eggNOG" id="COG0060">
    <property type="taxonomic scope" value="Bacteria"/>
</dbReference>
<dbReference type="HOGENOM" id="CLU_001493_7_0_7"/>
<dbReference type="OrthoDB" id="9810365at2"/>
<dbReference type="Proteomes" id="UP000000448">
    <property type="component" value="Chromosome"/>
</dbReference>
<dbReference type="GO" id="GO:0005829">
    <property type="term" value="C:cytosol"/>
    <property type="evidence" value="ECO:0007669"/>
    <property type="project" value="TreeGrafter"/>
</dbReference>
<dbReference type="GO" id="GO:0002161">
    <property type="term" value="F:aminoacyl-tRNA deacylase activity"/>
    <property type="evidence" value="ECO:0007669"/>
    <property type="project" value="InterPro"/>
</dbReference>
<dbReference type="GO" id="GO:0005524">
    <property type="term" value="F:ATP binding"/>
    <property type="evidence" value="ECO:0007669"/>
    <property type="project" value="UniProtKB-UniRule"/>
</dbReference>
<dbReference type="GO" id="GO:0004822">
    <property type="term" value="F:isoleucine-tRNA ligase activity"/>
    <property type="evidence" value="ECO:0007669"/>
    <property type="project" value="UniProtKB-UniRule"/>
</dbReference>
<dbReference type="GO" id="GO:0000049">
    <property type="term" value="F:tRNA binding"/>
    <property type="evidence" value="ECO:0007669"/>
    <property type="project" value="InterPro"/>
</dbReference>
<dbReference type="GO" id="GO:0008270">
    <property type="term" value="F:zinc ion binding"/>
    <property type="evidence" value="ECO:0007669"/>
    <property type="project" value="UniProtKB-UniRule"/>
</dbReference>
<dbReference type="GO" id="GO:0006428">
    <property type="term" value="P:isoleucyl-tRNA aminoacylation"/>
    <property type="evidence" value="ECO:0007669"/>
    <property type="project" value="UniProtKB-UniRule"/>
</dbReference>
<dbReference type="CDD" id="cd07960">
    <property type="entry name" value="Anticodon_Ia_Ile_BEm"/>
    <property type="match status" value="1"/>
</dbReference>
<dbReference type="CDD" id="cd00818">
    <property type="entry name" value="IleRS_core"/>
    <property type="match status" value="1"/>
</dbReference>
<dbReference type="FunFam" id="3.40.50.620:FF:000042">
    <property type="entry name" value="Isoleucine--tRNA ligase"/>
    <property type="match status" value="1"/>
</dbReference>
<dbReference type="Gene3D" id="1.10.730.20">
    <property type="match status" value="1"/>
</dbReference>
<dbReference type="Gene3D" id="3.40.50.620">
    <property type="entry name" value="HUPs"/>
    <property type="match status" value="2"/>
</dbReference>
<dbReference type="Gene3D" id="3.90.740.10">
    <property type="entry name" value="Valyl/Leucyl/Isoleucyl-tRNA synthetase, editing domain"/>
    <property type="match status" value="1"/>
</dbReference>
<dbReference type="HAMAP" id="MF_02002">
    <property type="entry name" value="Ile_tRNA_synth_type1"/>
    <property type="match status" value="1"/>
</dbReference>
<dbReference type="InterPro" id="IPR001412">
    <property type="entry name" value="aa-tRNA-synth_I_CS"/>
</dbReference>
<dbReference type="InterPro" id="IPR002300">
    <property type="entry name" value="aa-tRNA-synth_Ia"/>
</dbReference>
<dbReference type="InterPro" id="IPR033708">
    <property type="entry name" value="Anticodon_Ile_BEm"/>
</dbReference>
<dbReference type="InterPro" id="IPR002301">
    <property type="entry name" value="Ile-tRNA-ligase"/>
</dbReference>
<dbReference type="InterPro" id="IPR023585">
    <property type="entry name" value="Ile-tRNA-ligase_type1"/>
</dbReference>
<dbReference type="InterPro" id="IPR050081">
    <property type="entry name" value="Ile-tRNA_ligase"/>
</dbReference>
<dbReference type="InterPro" id="IPR013155">
    <property type="entry name" value="M/V/L/I-tRNA-synth_anticd-bd"/>
</dbReference>
<dbReference type="InterPro" id="IPR014729">
    <property type="entry name" value="Rossmann-like_a/b/a_fold"/>
</dbReference>
<dbReference type="InterPro" id="IPR009080">
    <property type="entry name" value="tRNAsynth_Ia_anticodon-bd"/>
</dbReference>
<dbReference type="InterPro" id="IPR009008">
    <property type="entry name" value="Val/Leu/Ile-tRNA-synth_edit"/>
</dbReference>
<dbReference type="NCBIfam" id="TIGR00392">
    <property type="entry name" value="ileS"/>
    <property type="match status" value="1"/>
</dbReference>
<dbReference type="PANTHER" id="PTHR42765:SF1">
    <property type="entry name" value="ISOLEUCINE--TRNA LIGASE, MITOCHONDRIAL"/>
    <property type="match status" value="1"/>
</dbReference>
<dbReference type="PANTHER" id="PTHR42765">
    <property type="entry name" value="SOLEUCYL-TRNA SYNTHETASE"/>
    <property type="match status" value="1"/>
</dbReference>
<dbReference type="Pfam" id="PF08264">
    <property type="entry name" value="Anticodon_1"/>
    <property type="match status" value="1"/>
</dbReference>
<dbReference type="Pfam" id="PF00133">
    <property type="entry name" value="tRNA-synt_1"/>
    <property type="match status" value="1"/>
</dbReference>
<dbReference type="PRINTS" id="PR00984">
    <property type="entry name" value="TRNASYNTHILE"/>
</dbReference>
<dbReference type="SUPFAM" id="SSF47323">
    <property type="entry name" value="Anticodon-binding domain of a subclass of class I aminoacyl-tRNA synthetases"/>
    <property type="match status" value="1"/>
</dbReference>
<dbReference type="SUPFAM" id="SSF52374">
    <property type="entry name" value="Nucleotidylyl transferase"/>
    <property type="match status" value="1"/>
</dbReference>
<dbReference type="SUPFAM" id="SSF50677">
    <property type="entry name" value="ValRS/IleRS/LeuRS editing domain"/>
    <property type="match status" value="1"/>
</dbReference>
<dbReference type="PROSITE" id="PS00178">
    <property type="entry name" value="AA_TRNA_LIGASE_I"/>
    <property type="match status" value="1"/>
</dbReference>
<reference key="1">
    <citation type="journal article" date="2009" name="PLoS Genet.">
        <title>Adaptations to submarine hydrothermal environments exemplified by the genome of Nautilia profundicola.</title>
        <authorList>
            <person name="Campbell B.J."/>
            <person name="Smith J.L."/>
            <person name="Hanson T.E."/>
            <person name="Klotz M.G."/>
            <person name="Stein L.Y."/>
            <person name="Lee C.K."/>
            <person name="Wu D."/>
            <person name="Robinson J.M."/>
            <person name="Khouri H.M."/>
            <person name="Eisen J.A."/>
            <person name="Cary S.C."/>
        </authorList>
    </citation>
    <scope>NUCLEOTIDE SEQUENCE [LARGE SCALE GENOMIC DNA]</scope>
    <source>
        <strain>ATCC BAA-1463 / DSM 18972 / AmH</strain>
    </source>
</reference>
<protein>
    <recommendedName>
        <fullName evidence="1">Isoleucine--tRNA ligase</fullName>
        <ecNumber evidence="1">6.1.1.5</ecNumber>
    </recommendedName>
    <alternativeName>
        <fullName evidence="1">Isoleucyl-tRNA synthetase</fullName>
        <shortName evidence="1">IleRS</shortName>
    </alternativeName>
</protein>
<proteinExistence type="inferred from homology"/>
<gene>
    <name evidence="1" type="primary">ileS</name>
    <name type="ordered locus">NAMH_0696</name>
</gene>
<sequence>MDYKDTLLLPKTTFPMRGNLPQNEPKKYKKWFSEHVYERMKQNRVGNDKFNLHDGPPYANGHIHIGHALNKILKDMIVKYYYFQGFDVRYTPGWDCHGLPIEQQVEKKIGREKKESLPKSKVRELCRQHAAKFIEIQKEEFQNLGVIGDWDNPYKTMDFEFEANIYKALAEIAKKGLLVERSKPVFWCMHDKTALAEAEVEYEDKEDYSIYVAFPLSNEAKSKLGIDNASIVIWTTTPWTLPANMGIALNPEEKYVLSEDGKIVAKELYENLKEAEVVSGEIVKEFDASELENLKAINPLNGRESVIILGEHVTMDGGTGCVHTAPGHGEEDYRVWLKYGFSEILQPVDDEGKYSNLIVTEKLLPEEFKGMHIFEANPKILDLLGDNLVKVSKFTHSYPHCWRCHNPVIFRATKQFFIAMDKEVNGDTLRHRALSEIEKVEFTPKTGKNRLSTMVANRPDWCISRQRDWGVPIAFFRNKDTGELIIDDEIIENVYEIFKVKGADAWYDLSIEELLPESKKEMASKLEKVNDILDVWFDSGSTWFAVLKNGPYDAGEYPANMYLEGSDQHRGWFQSSLLVSTSIEERAPYKSILTHGFTVDEKGEKMSKSKGNVVAPQEVSKKFGTEILRLWVATSDYSGDIKISDGILKQVAEQYRKIRNTIRFLLANVNDLEEIKLTNPSMIDRWILARSKEVFDEVVALFGKYDFSKAFNILNNFIVTELSAIYMDVCKDRLYCEPLNSEKRRNSQSTMAVIVKELISLLAPVLTYTMDEAVEHAPKVIKEDAKDVFDFVYTPLTAVENPIDEEILEIRRRFFEIVDRLKKEKVIKDTLELAIETNYDKLLVDEMADFFVVSLISDNIEGETLDEFHISDEQFVVKIKRSPLHKCPRCWRYLAEEEGALCERCEKAING</sequence>
<feature type="chain" id="PRO_1000189183" description="Isoleucine--tRNA ligase">
    <location>
        <begin position="1"/>
        <end position="911"/>
    </location>
</feature>
<feature type="short sequence motif" description="'HIGH' region">
    <location>
        <begin position="57"/>
        <end position="67"/>
    </location>
</feature>
<feature type="short sequence motif" description="'KMSKS' region">
    <location>
        <begin position="605"/>
        <end position="609"/>
    </location>
</feature>
<feature type="binding site" evidence="1">
    <location>
        <position position="564"/>
    </location>
    <ligand>
        <name>L-isoleucyl-5'-AMP</name>
        <dbReference type="ChEBI" id="CHEBI:178002"/>
    </ligand>
</feature>
<feature type="binding site" evidence="1">
    <location>
        <position position="608"/>
    </location>
    <ligand>
        <name>ATP</name>
        <dbReference type="ChEBI" id="CHEBI:30616"/>
    </ligand>
</feature>
<feature type="binding site" evidence="1">
    <location>
        <position position="887"/>
    </location>
    <ligand>
        <name>Zn(2+)</name>
        <dbReference type="ChEBI" id="CHEBI:29105"/>
    </ligand>
</feature>
<feature type="binding site" evidence="1">
    <location>
        <position position="890"/>
    </location>
    <ligand>
        <name>Zn(2+)</name>
        <dbReference type="ChEBI" id="CHEBI:29105"/>
    </ligand>
</feature>
<feature type="binding site" evidence="1">
    <location>
        <position position="902"/>
    </location>
    <ligand>
        <name>Zn(2+)</name>
        <dbReference type="ChEBI" id="CHEBI:29105"/>
    </ligand>
</feature>
<feature type="binding site" evidence="1">
    <location>
        <position position="905"/>
    </location>
    <ligand>
        <name>Zn(2+)</name>
        <dbReference type="ChEBI" id="CHEBI:29105"/>
    </ligand>
</feature>
<accession>B9L8Z9</accession>
<comment type="function">
    <text evidence="1">Catalyzes the attachment of isoleucine to tRNA(Ile). As IleRS can inadvertently accommodate and process structurally similar amino acids such as valine, to avoid such errors it has two additional distinct tRNA(Ile)-dependent editing activities. One activity is designated as 'pretransfer' editing and involves the hydrolysis of activated Val-AMP. The other activity is designated 'posttransfer' editing and involves deacylation of mischarged Val-tRNA(Ile).</text>
</comment>
<comment type="catalytic activity">
    <reaction evidence="1">
        <text>tRNA(Ile) + L-isoleucine + ATP = L-isoleucyl-tRNA(Ile) + AMP + diphosphate</text>
        <dbReference type="Rhea" id="RHEA:11060"/>
        <dbReference type="Rhea" id="RHEA-COMP:9666"/>
        <dbReference type="Rhea" id="RHEA-COMP:9695"/>
        <dbReference type="ChEBI" id="CHEBI:30616"/>
        <dbReference type="ChEBI" id="CHEBI:33019"/>
        <dbReference type="ChEBI" id="CHEBI:58045"/>
        <dbReference type="ChEBI" id="CHEBI:78442"/>
        <dbReference type="ChEBI" id="CHEBI:78528"/>
        <dbReference type="ChEBI" id="CHEBI:456215"/>
        <dbReference type="EC" id="6.1.1.5"/>
    </reaction>
</comment>
<comment type="cofactor">
    <cofactor evidence="1">
        <name>Zn(2+)</name>
        <dbReference type="ChEBI" id="CHEBI:29105"/>
    </cofactor>
    <text evidence="1">Binds 1 zinc ion per subunit.</text>
</comment>
<comment type="subunit">
    <text evidence="1">Monomer.</text>
</comment>
<comment type="subcellular location">
    <subcellularLocation>
        <location evidence="1">Cytoplasm</location>
    </subcellularLocation>
</comment>
<comment type="domain">
    <text evidence="1">IleRS has two distinct active sites: one for aminoacylation and one for editing. The misactivated valine is translocated from the active site to the editing site, which sterically excludes the correctly activated isoleucine. The single editing site contains two valyl binding pockets, one specific for each substrate (Val-AMP or Val-tRNA(Ile)).</text>
</comment>
<comment type="similarity">
    <text evidence="1">Belongs to the class-I aminoacyl-tRNA synthetase family. IleS type 1 subfamily.</text>
</comment>
<keyword id="KW-0030">Aminoacyl-tRNA synthetase</keyword>
<keyword id="KW-0067">ATP-binding</keyword>
<keyword id="KW-0963">Cytoplasm</keyword>
<keyword id="KW-0436">Ligase</keyword>
<keyword id="KW-0479">Metal-binding</keyword>
<keyword id="KW-0547">Nucleotide-binding</keyword>
<keyword id="KW-0648">Protein biosynthesis</keyword>
<keyword id="KW-0862">Zinc</keyword>